<evidence type="ECO:0000255" key="1">
    <source>
        <dbReference type="HAMAP-Rule" id="MF_00165"/>
    </source>
</evidence>
<organism>
    <name type="scientific">Burkholderia orbicola (strain MC0-3)</name>
    <dbReference type="NCBI Taxonomy" id="406425"/>
    <lineage>
        <taxon>Bacteria</taxon>
        <taxon>Pseudomonadati</taxon>
        <taxon>Pseudomonadota</taxon>
        <taxon>Betaproteobacteria</taxon>
        <taxon>Burkholderiales</taxon>
        <taxon>Burkholderiaceae</taxon>
        <taxon>Burkholderia</taxon>
        <taxon>Burkholderia cepacia complex</taxon>
        <taxon>Burkholderia orbicola</taxon>
    </lineage>
</organism>
<feature type="chain" id="PRO_1000097380" description="Thymidylate kinase">
    <location>
        <begin position="1"/>
        <end position="206"/>
    </location>
</feature>
<feature type="binding site" evidence="1">
    <location>
        <begin position="11"/>
        <end position="18"/>
    </location>
    <ligand>
        <name>ATP</name>
        <dbReference type="ChEBI" id="CHEBI:30616"/>
    </ligand>
</feature>
<name>KTHY_BURO0</name>
<keyword id="KW-0067">ATP-binding</keyword>
<keyword id="KW-0418">Kinase</keyword>
<keyword id="KW-0545">Nucleotide biosynthesis</keyword>
<keyword id="KW-0547">Nucleotide-binding</keyword>
<keyword id="KW-0808">Transferase</keyword>
<dbReference type="EC" id="2.7.4.9" evidence="1"/>
<dbReference type="EMBL" id="CP000958">
    <property type="protein sequence ID" value="ACA91077.1"/>
    <property type="molecule type" value="Genomic_DNA"/>
</dbReference>
<dbReference type="RefSeq" id="WP_011549634.1">
    <property type="nucleotide sequence ID" value="NC_010508.1"/>
</dbReference>
<dbReference type="SMR" id="B1JTS0"/>
<dbReference type="GeneID" id="83048689"/>
<dbReference type="KEGG" id="bcm:Bcenmc03_1916"/>
<dbReference type="HOGENOM" id="CLU_049131_0_2_4"/>
<dbReference type="Proteomes" id="UP000002169">
    <property type="component" value="Chromosome 1"/>
</dbReference>
<dbReference type="GO" id="GO:0005829">
    <property type="term" value="C:cytosol"/>
    <property type="evidence" value="ECO:0007669"/>
    <property type="project" value="TreeGrafter"/>
</dbReference>
<dbReference type="GO" id="GO:0005524">
    <property type="term" value="F:ATP binding"/>
    <property type="evidence" value="ECO:0007669"/>
    <property type="project" value="UniProtKB-UniRule"/>
</dbReference>
<dbReference type="GO" id="GO:0004798">
    <property type="term" value="F:dTMP kinase activity"/>
    <property type="evidence" value="ECO:0007669"/>
    <property type="project" value="UniProtKB-UniRule"/>
</dbReference>
<dbReference type="GO" id="GO:0006233">
    <property type="term" value="P:dTDP biosynthetic process"/>
    <property type="evidence" value="ECO:0007669"/>
    <property type="project" value="InterPro"/>
</dbReference>
<dbReference type="GO" id="GO:0006235">
    <property type="term" value="P:dTTP biosynthetic process"/>
    <property type="evidence" value="ECO:0007669"/>
    <property type="project" value="UniProtKB-UniRule"/>
</dbReference>
<dbReference type="GO" id="GO:0006227">
    <property type="term" value="P:dUDP biosynthetic process"/>
    <property type="evidence" value="ECO:0007669"/>
    <property type="project" value="TreeGrafter"/>
</dbReference>
<dbReference type="CDD" id="cd01672">
    <property type="entry name" value="TMPK"/>
    <property type="match status" value="1"/>
</dbReference>
<dbReference type="FunFam" id="3.40.50.300:FF:000225">
    <property type="entry name" value="Thymidylate kinase"/>
    <property type="match status" value="1"/>
</dbReference>
<dbReference type="Gene3D" id="3.40.50.300">
    <property type="entry name" value="P-loop containing nucleotide triphosphate hydrolases"/>
    <property type="match status" value="1"/>
</dbReference>
<dbReference type="HAMAP" id="MF_00165">
    <property type="entry name" value="Thymidylate_kinase"/>
    <property type="match status" value="1"/>
</dbReference>
<dbReference type="InterPro" id="IPR027417">
    <property type="entry name" value="P-loop_NTPase"/>
</dbReference>
<dbReference type="InterPro" id="IPR039430">
    <property type="entry name" value="Thymidylate_kin-like_dom"/>
</dbReference>
<dbReference type="InterPro" id="IPR018094">
    <property type="entry name" value="Thymidylate_kinase"/>
</dbReference>
<dbReference type="NCBIfam" id="TIGR00041">
    <property type="entry name" value="DTMP_kinase"/>
    <property type="match status" value="1"/>
</dbReference>
<dbReference type="PANTHER" id="PTHR10344">
    <property type="entry name" value="THYMIDYLATE KINASE"/>
    <property type="match status" value="1"/>
</dbReference>
<dbReference type="PANTHER" id="PTHR10344:SF4">
    <property type="entry name" value="UMP-CMP KINASE 2, MITOCHONDRIAL"/>
    <property type="match status" value="1"/>
</dbReference>
<dbReference type="Pfam" id="PF02223">
    <property type="entry name" value="Thymidylate_kin"/>
    <property type="match status" value="1"/>
</dbReference>
<dbReference type="SUPFAM" id="SSF52540">
    <property type="entry name" value="P-loop containing nucleoside triphosphate hydrolases"/>
    <property type="match status" value="1"/>
</dbReference>
<reference key="1">
    <citation type="submission" date="2008-02" db="EMBL/GenBank/DDBJ databases">
        <title>Complete sequence of chromosome 1 of Burkholderia cenocepacia MC0-3.</title>
        <authorList>
            <person name="Copeland A."/>
            <person name="Lucas S."/>
            <person name="Lapidus A."/>
            <person name="Barry K."/>
            <person name="Bruce D."/>
            <person name="Goodwin L."/>
            <person name="Glavina del Rio T."/>
            <person name="Dalin E."/>
            <person name="Tice H."/>
            <person name="Pitluck S."/>
            <person name="Chain P."/>
            <person name="Malfatti S."/>
            <person name="Shin M."/>
            <person name="Vergez L."/>
            <person name="Schmutz J."/>
            <person name="Larimer F."/>
            <person name="Land M."/>
            <person name="Hauser L."/>
            <person name="Kyrpides N."/>
            <person name="Mikhailova N."/>
            <person name="Tiedje J."/>
            <person name="Richardson P."/>
        </authorList>
    </citation>
    <scope>NUCLEOTIDE SEQUENCE [LARGE SCALE GENOMIC DNA]</scope>
    <source>
        <strain>MC0-3</strain>
    </source>
</reference>
<protein>
    <recommendedName>
        <fullName evidence="1">Thymidylate kinase</fullName>
        <ecNumber evidence="1">2.7.4.9</ecNumber>
    </recommendedName>
    <alternativeName>
        <fullName evidence="1">dTMP kinase</fullName>
    </alternativeName>
</protein>
<proteinExistence type="inferred from homology"/>
<sequence>MASGKFITFEGIDGAGKTTHLQWFCERLQGRLAAAGRQVVVTREPGGTQLGEKLREILLNQPMDLETEALLMFAARREHLALVIEPALARGDWVVSDRFTDATFAYQGGGRGLPRDKLETLERWVQGGFQPDLTVLFDVAPQVASERRGAVRMPDKFESESDAFFSRTRAEYLRRAEEAPHRFAIVDATRSIPEIRQQLERVLAAL</sequence>
<accession>B1JTS0</accession>
<gene>
    <name evidence="1" type="primary">tmk</name>
    <name type="ordered locus">Bcenmc03_1916</name>
</gene>
<comment type="function">
    <text evidence="1">Phosphorylation of dTMP to form dTDP in both de novo and salvage pathways of dTTP synthesis.</text>
</comment>
<comment type="catalytic activity">
    <reaction evidence="1">
        <text>dTMP + ATP = dTDP + ADP</text>
        <dbReference type="Rhea" id="RHEA:13517"/>
        <dbReference type="ChEBI" id="CHEBI:30616"/>
        <dbReference type="ChEBI" id="CHEBI:58369"/>
        <dbReference type="ChEBI" id="CHEBI:63528"/>
        <dbReference type="ChEBI" id="CHEBI:456216"/>
        <dbReference type="EC" id="2.7.4.9"/>
    </reaction>
</comment>
<comment type="similarity">
    <text evidence="1">Belongs to the thymidylate kinase family.</text>
</comment>